<comment type="function">
    <text evidence="1">Catalyzes the phosphorylation of D-glycero-D-manno-heptose 7-phosphate at the C-1 position to selectively form D-glycero-beta-D-manno-heptose-1,7-bisphosphate.</text>
</comment>
<comment type="function">
    <text evidence="1">Catalyzes the ADP transfer from ATP to D-glycero-beta-D-manno-heptose 1-phosphate, yielding ADP-D-glycero-beta-D-manno-heptose.</text>
</comment>
<comment type="catalytic activity">
    <reaction evidence="1">
        <text>D-glycero-beta-D-manno-heptose 7-phosphate + ATP = D-glycero-beta-D-manno-heptose 1,7-bisphosphate + ADP + H(+)</text>
        <dbReference type="Rhea" id="RHEA:27473"/>
        <dbReference type="ChEBI" id="CHEBI:15378"/>
        <dbReference type="ChEBI" id="CHEBI:30616"/>
        <dbReference type="ChEBI" id="CHEBI:60204"/>
        <dbReference type="ChEBI" id="CHEBI:60208"/>
        <dbReference type="ChEBI" id="CHEBI:456216"/>
        <dbReference type="EC" id="2.7.1.167"/>
    </reaction>
</comment>
<comment type="catalytic activity">
    <reaction evidence="1">
        <text>D-glycero-beta-D-manno-heptose 1-phosphate + ATP + H(+) = ADP-D-glycero-beta-D-manno-heptose + diphosphate</text>
        <dbReference type="Rhea" id="RHEA:27465"/>
        <dbReference type="ChEBI" id="CHEBI:15378"/>
        <dbReference type="ChEBI" id="CHEBI:30616"/>
        <dbReference type="ChEBI" id="CHEBI:33019"/>
        <dbReference type="ChEBI" id="CHEBI:59967"/>
        <dbReference type="ChEBI" id="CHEBI:61593"/>
        <dbReference type="EC" id="2.7.7.70"/>
    </reaction>
</comment>
<comment type="pathway">
    <text evidence="1">Nucleotide-sugar biosynthesis; ADP-L-glycero-beta-D-manno-heptose biosynthesis; ADP-L-glycero-beta-D-manno-heptose from D-glycero-beta-D-manno-heptose 7-phosphate: step 1/4.</text>
</comment>
<comment type="pathway">
    <text evidence="1">Nucleotide-sugar biosynthesis; ADP-L-glycero-beta-D-manno-heptose biosynthesis; ADP-L-glycero-beta-D-manno-heptose from D-glycero-beta-D-manno-heptose 7-phosphate: step 3/4.</text>
</comment>
<comment type="subunit">
    <text evidence="1">Homodimer.</text>
</comment>
<comment type="similarity">
    <text evidence="1">In the N-terminal section; belongs to the carbohydrate kinase PfkB family.</text>
</comment>
<comment type="similarity">
    <text evidence="1">In the C-terminal section; belongs to the cytidylyltransferase family.</text>
</comment>
<protein>
    <recommendedName>
        <fullName evidence="1">Bifunctional protein HldE</fullName>
    </recommendedName>
    <domain>
        <recommendedName>
            <fullName evidence="1">D-beta-D-heptose 7-phosphate kinase</fullName>
            <ecNumber evidence="1">2.7.1.167</ecNumber>
        </recommendedName>
        <alternativeName>
            <fullName evidence="1">D-beta-D-heptose 7-phosphotransferase</fullName>
        </alternativeName>
        <alternativeName>
            <fullName evidence="1">D-glycero-beta-D-manno-heptose-7-phosphate kinase</fullName>
        </alternativeName>
    </domain>
    <domain>
        <recommendedName>
            <fullName evidence="1">D-beta-D-heptose 1-phosphate adenylyltransferase</fullName>
            <ecNumber evidence="1">2.7.7.70</ecNumber>
        </recommendedName>
        <alternativeName>
            <fullName evidence="1">D-glycero-beta-D-manno-heptose 1-phosphate adenylyltransferase</fullName>
        </alternativeName>
    </domain>
</protein>
<keyword id="KW-0067">ATP-binding</keyword>
<keyword id="KW-0119">Carbohydrate metabolism</keyword>
<keyword id="KW-0418">Kinase</keyword>
<keyword id="KW-0511">Multifunctional enzyme</keyword>
<keyword id="KW-0547">Nucleotide-binding</keyword>
<keyword id="KW-0548">Nucleotidyltransferase</keyword>
<keyword id="KW-1185">Reference proteome</keyword>
<keyword id="KW-0808">Transferase</keyword>
<sequence>MERKEIESLFTRAREIRALVIGDLMLDEYLWGKAERISPEAPVQVVDVTREDLRLGGAGNVVNNLVALGCQVAVCSVIGGDENGSHLRHAFTGKGVDLTGVFEDPLRLTSKKTRVIAANQQIVRIDRESRDEISLEFEEKVLDFIAAEAARFNVILVSDYLKGVLTPRVLEAVCAAGRRLGIPVVVDPKGSDYGKYRGATILTPNRKEAETASRMSIRTEEGLTRAAETLLAGLELDALLITRSEEGMSLFMQDGRTVHIPTVAREVYDVTGAGDTVLSVLSVGLACGLEFGEAARVANVAAGIAVGKLGTSTVSPGEIIAEIGHAHPDSDAKIKNLDALAAIVKAEKTRGKRLVFTNGCFDLLHVGHVKYLQKARTFGDLLVVGLNSDASVRRLKGAERPLIGEAERAHILAALDCVDFVVIFDEDTPLRLIETLQPQVLVKGGDYTPERVVGKEVVESYGGRVELVTFVDGKSTTNIIEKIRTGSIKE</sequence>
<organism>
    <name type="scientific">Geotalea uraniireducens (strain Rf4)</name>
    <name type="common">Geobacter uraniireducens</name>
    <dbReference type="NCBI Taxonomy" id="351605"/>
    <lineage>
        <taxon>Bacteria</taxon>
        <taxon>Pseudomonadati</taxon>
        <taxon>Thermodesulfobacteriota</taxon>
        <taxon>Desulfuromonadia</taxon>
        <taxon>Geobacterales</taxon>
        <taxon>Geobacteraceae</taxon>
        <taxon>Geotalea</taxon>
    </lineage>
</organism>
<dbReference type="EC" id="2.7.1.167" evidence="1"/>
<dbReference type="EC" id="2.7.7.70" evidence="1"/>
<dbReference type="EMBL" id="CP000698">
    <property type="protein sequence ID" value="ABQ27372.1"/>
    <property type="molecule type" value="Genomic_DNA"/>
</dbReference>
<dbReference type="RefSeq" id="WP_011940036.1">
    <property type="nucleotide sequence ID" value="NC_009483.1"/>
</dbReference>
<dbReference type="SMR" id="A5G6F4"/>
<dbReference type="STRING" id="351605.Gura_3211"/>
<dbReference type="KEGG" id="gur:Gura_3211"/>
<dbReference type="HOGENOM" id="CLU_021150_2_1_7"/>
<dbReference type="OrthoDB" id="9802794at2"/>
<dbReference type="UniPathway" id="UPA00356">
    <property type="reaction ID" value="UER00437"/>
</dbReference>
<dbReference type="UniPathway" id="UPA00356">
    <property type="reaction ID" value="UER00439"/>
</dbReference>
<dbReference type="Proteomes" id="UP000006695">
    <property type="component" value="Chromosome"/>
</dbReference>
<dbReference type="GO" id="GO:0005829">
    <property type="term" value="C:cytosol"/>
    <property type="evidence" value="ECO:0007669"/>
    <property type="project" value="TreeGrafter"/>
</dbReference>
<dbReference type="GO" id="GO:0005524">
    <property type="term" value="F:ATP binding"/>
    <property type="evidence" value="ECO:0007669"/>
    <property type="project" value="UniProtKB-UniRule"/>
</dbReference>
<dbReference type="GO" id="GO:0033785">
    <property type="term" value="F:heptose 7-phosphate kinase activity"/>
    <property type="evidence" value="ECO:0007669"/>
    <property type="project" value="UniProtKB-UniRule"/>
</dbReference>
<dbReference type="GO" id="GO:0033786">
    <property type="term" value="F:heptose-1-phosphate adenylyltransferase activity"/>
    <property type="evidence" value="ECO:0007669"/>
    <property type="project" value="UniProtKB-UniRule"/>
</dbReference>
<dbReference type="GO" id="GO:0016773">
    <property type="term" value="F:phosphotransferase activity, alcohol group as acceptor"/>
    <property type="evidence" value="ECO:0007669"/>
    <property type="project" value="InterPro"/>
</dbReference>
<dbReference type="GO" id="GO:0097171">
    <property type="term" value="P:ADP-L-glycero-beta-D-manno-heptose biosynthetic process"/>
    <property type="evidence" value="ECO:0007669"/>
    <property type="project" value="UniProtKB-UniPathway"/>
</dbReference>
<dbReference type="CDD" id="cd01172">
    <property type="entry name" value="RfaE_like"/>
    <property type="match status" value="1"/>
</dbReference>
<dbReference type="FunFam" id="3.40.1190.20:FF:000002">
    <property type="entry name" value="Bifunctional protein HldE"/>
    <property type="match status" value="1"/>
</dbReference>
<dbReference type="Gene3D" id="3.40.1190.20">
    <property type="match status" value="1"/>
</dbReference>
<dbReference type="Gene3D" id="3.40.50.620">
    <property type="entry name" value="HUPs"/>
    <property type="match status" value="1"/>
</dbReference>
<dbReference type="HAMAP" id="MF_01603">
    <property type="entry name" value="HldE"/>
    <property type="match status" value="1"/>
</dbReference>
<dbReference type="InterPro" id="IPR023030">
    <property type="entry name" value="Bifunc_HldE"/>
</dbReference>
<dbReference type="InterPro" id="IPR004821">
    <property type="entry name" value="Cyt_trans-like"/>
</dbReference>
<dbReference type="InterPro" id="IPR011611">
    <property type="entry name" value="PfkB_dom"/>
</dbReference>
<dbReference type="InterPro" id="IPR011913">
    <property type="entry name" value="RfaE_dom_I"/>
</dbReference>
<dbReference type="InterPro" id="IPR011914">
    <property type="entry name" value="RfaE_dom_II"/>
</dbReference>
<dbReference type="InterPro" id="IPR029056">
    <property type="entry name" value="Ribokinase-like"/>
</dbReference>
<dbReference type="InterPro" id="IPR014729">
    <property type="entry name" value="Rossmann-like_a/b/a_fold"/>
</dbReference>
<dbReference type="NCBIfam" id="TIGR00125">
    <property type="entry name" value="cyt_tran_rel"/>
    <property type="match status" value="1"/>
</dbReference>
<dbReference type="NCBIfam" id="TIGR02198">
    <property type="entry name" value="rfaE_dom_I"/>
    <property type="match status" value="1"/>
</dbReference>
<dbReference type="NCBIfam" id="TIGR02199">
    <property type="entry name" value="rfaE_dom_II"/>
    <property type="match status" value="1"/>
</dbReference>
<dbReference type="PANTHER" id="PTHR46969">
    <property type="entry name" value="BIFUNCTIONAL PROTEIN HLDE"/>
    <property type="match status" value="1"/>
</dbReference>
<dbReference type="PANTHER" id="PTHR46969:SF1">
    <property type="entry name" value="BIFUNCTIONAL PROTEIN HLDE"/>
    <property type="match status" value="1"/>
</dbReference>
<dbReference type="Pfam" id="PF01467">
    <property type="entry name" value="CTP_transf_like"/>
    <property type="match status" value="1"/>
</dbReference>
<dbReference type="Pfam" id="PF00294">
    <property type="entry name" value="PfkB"/>
    <property type="match status" value="1"/>
</dbReference>
<dbReference type="SUPFAM" id="SSF52374">
    <property type="entry name" value="Nucleotidylyl transferase"/>
    <property type="match status" value="1"/>
</dbReference>
<dbReference type="SUPFAM" id="SSF53613">
    <property type="entry name" value="Ribokinase-like"/>
    <property type="match status" value="1"/>
</dbReference>
<accession>A5G6F4</accession>
<evidence type="ECO:0000255" key="1">
    <source>
        <dbReference type="HAMAP-Rule" id="MF_01603"/>
    </source>
</evidence>
<reference key="1">
    <citation type="submission" date="2007-05" db="EMBL/GenBank/DDBJ databases">
        <title>Complete sequence of Geobacter uraniireducens Rf4.</title>
        <authorList>
            <consortium name="US DOE Joint Genome Institute"/>
            <person name="Copeland A."/>
            <person name="Lucas S."/>
            <person name="Lapidus A."/>
            <person name="Barry K."/>
            <person name="Detter J.C."/>
            <person name="Glavina del Rio T."/>
            <person name="Hammon N."/>
            <person name="Israni S."/>
            <person name="Dalin E."/>
            <person name="Tice H."/>
            <person name="Pitluck S."/>
            <person name="Chertkov O."/>
            <person name="Brettin T."/>
            <person name="Bruce D."/>
            <person name="Han C."/>
            <person name="Schmutz J."/>
            <person name="Larimer F."/>
            <person name="Land M."/>
            <person name="Hauser L."/>
            <person name="Kyrpides N."/>
            <person name="Mikhailova N."/>
            <person name="Shelobolina E."/>
            <person name="Aklujkar M."/>
            <person name="Lovley D."/>
            <person name="Richardson P."/>
        </authorList>
    </citation>
    <scope>NUCLEOTIDE SEQUENCE [LARGE SCALE GENOMIC DNA]</scope>
    <source>
        <strain>ATCC BAA-1134 / JCM 13001 / Rf4</strain>
    </source>
</reference>
<name>HLDE_GEOUR</name>
<proteinExistence type="inferred from homology"/>
<gene>
    <name evidence="1" type="primary">hldE</name>
    <name type="ordered locus">Gura_3211</name>
</gene>
<feature type="chain" id="PRO_1000088021" description="Bifunctional protein HldE">
    <location>
        <begin position="1"/>
        <end position="490"/>
    </location>
</feature>
<feature type="region of interest" description="Ribokinase">
    <location>
        <begin position="1"/>
        <end position="330"/>
    </location>
</feature>
<feature type="region of interest" description="Cytidylyltransferase">
    <location>
        <begin position="356"/>
        <end position="490"/>
    </location>
</feature>
<feature type="active site" evidence="1">
    <location>
        <position position="275"/>
    </location>
</feature>
<feature type="binding site" evidence="1">
    <location>
        <begin position="205"/>
        <end position="208"/>
    </location>
    <ligand>
        <name>ATP</name>
        <dbReference type="ChEBI" id="CHEBI:30616"/>
    </ligand>
</feature>